<keyword id="KW-0143">Chaperone</keyword>
<keyword id="KW-0963">Cytoplasm</keyword>
<keyword id="KW-0996">Nickel insertion</keyword>
<name>UREF_YERPN</name>
<gene>
    <name evidence="1" type="primary">ureF</name>
    <name type="ordered locus">YPN_1153</name>
    <name type="ORF">YP516_1263</name>
</gene>
<proteinExistence type="inferred from homology"/>
<accession>Q1CKJ7</accession>
<accession>C4GR95</accession>
<evidence type="ECO:0000255" key="1">
    <source>
        <dbReference type="HAMAP-Rule" id="MF_01385"/>
    </source>
</evidence>
<organism>
    <name type="scientific">Yersinia pestis bv. Antiqua (strain Nepal516)</name>
    <dbReference type="NCBI Taxonomy" id="377628"/>
    <lineage>
        <taxon>Bacteria</taxon>
        <taxon>Pseudomonadati</taxon>
        <taxon>Pseudomonadota</taxon>
        <taxon>Gammaproteobacteria</taxon>
        <taxon>Enterobacterales</taxon>
        <taxon>Yersiniaceae</taxon>
        <taxon>Yersinia</taxon>
    </lineage>
</organism>
<sequence>MNASDLIRIMQFGDSVLPVGAFTFSNGVESAIQTGIVHDVATLKGFVLTALKQAASCDGMGVVVAHRAVVADDRDGIIRADWAVNNRKLNEESRLMATRMGKKLAEMSIHVVEHPLISWWLEQIKNGNTAGTYPVTQAVVMAAQGIGQREVVVMHQYGVAMTILSAAMRLMRVTHFDTQHILFELNHDIEKFCDIAEIGDINQMSSYVPIVDVLAAVHVKAHVRLFSN</sequence>
<feature type="chain" id="PRO_1000145150" description="Urease accessory protein UreF">
    <location>
        <begin position="1"/>
        <end position="228"/>
    </location>
</feature>
<reference key="1">
    <citation type="journal article" date="2006" name="J. Bacteriol.">
        <title>Complete genome sequence of Yersinia pestis strains Antiqua and Nepal516: evidence of gene reduction in an emerging pathogen.</title>
        <authorList>
            <person name="Chain P.S.G."/>
            <person name="Hu P."/>
            <person name="Malfatti S.A."/>
            <person name="Radnedge L."/>
            <person name="Larimer F."/>
            <person name="Vergez L.M."/>
            <person name="Worsham P."/>
            <person name="Chu M.C."/>
            <person name="Andersen G.L."/>
        </authorList>
    </citation>
    <scope>NUCLEOTIDE SEQUENCE [LARGE SCALE GENOMIC DNA]</scope>
    <source>
        <strain>Nepal516</strain>
    </source>
</reference>
<reference key="2">
    <citation type="submission" date="2009-04" db="EMBL/GenBank/DDBJ databases">
        <title>Yersinia pestis Nepal516A whole genome shotgun sequencing project.</title>
        <authorList>
            <person name="Plunkett G. III"/>
            <person name="Anderson B.D."/>
            <person name="Baumler D.J."/>
            <person name="Burland V."/>
            <person name="Cabot E.L."/>
            <person name="Glasner J.D."/>
            <person name="Mau B."/>
            <person name="Neeno-Eckwall E."/>
            <person name="Perna N.T."/>
            <person name="Munk A.C."/>
            <person name="Tapia R."/>
            <person name="Green L.D."/>
            <person name="Rogers Y.C."/>
            <person name="Detter J.C."/>
            <person name="Bruce D.C."/>
            <person name="Brettin T.S."/>
        </authorList>
    </citation>
    <scope>NUCLEOTIDE SEQUENCE [LARGE SCALE GENOMIC DNA]</scope>
    <source>
        <strain>Nepal516</strain>
    </source>
</reference>
<dbReference type="EMBL" id="CP000305">
    <property type="protein sequence ID" value="ABG17483.1"/>
    <property type="molecule type" value="Genomic_DNA"/>
</dbReference>
<dbReference type="EMBL" id="ACNQ01000008">
    <property type="protein sequence ID" value="EEO77586.1"/>
    <property type="molecule type" value="Genomic_DNA"/>
</dbReference>
<dbReference type="RefSeq" id="WP_002212231.1">
    <property type="nucleotide sequence ID" value="NZ_ACNQ01000008.1"/>
</dbReference>
<dbReference type="SMR" id="Q1CKJ7"/>
<dbReference type="KEGG" id="ypn:YPN_1153"/>
<dbReference type="HOGENOM" id="CLU_049215_4_0_6"/>
<dbReference type="Proteomes" id="UP000008936">
    <property type="component" value="Chromosome"/>
</dbReference>
<dbReference type="GO" id="GO:0005737">
    <property type="term" value="C:cytoplasm"/>
    <property type="evidence" value="ECO:0007669"/>
    <property type="project" value="UniProtKB-SubCell"/>
</dbReference>
<dbReference type="GO" id="GO:0016151">
    <property type="term" value="F:nickel cation binding"/>
    <property type="evidence" value="ECO:0007669"/>
    <property type="project" value="UniProtKB-UniRule"/>
</dbReference>
<dbReference type="Gene3D" id="1.10.4190.10">
    <property type="entry name" value="Urease accessory protein UreF"/>
    <property type="match status" value="1"/>
</dbReference>
<dbReference type="HAMAP" id="MF_01385">
    <property type="entry name" value="UreF"/>
    <property type="match status" value="1"/>
</dbReference>
<dbReference type="InterPro" id="IPR002639">
    <property type="entry name" value="UreF"/>
</dbReference>
<dbReference type="InterPro" id="IPR038277">
    <property type="entry name" value="UreF_sf"/>
</dbReference>
<dbReference type="PANTHER" id="PTHR33620">
    <property type="entry name" value="UREASE ACCESSORY PROTEIN F"/>
    <property type="match status" value="1"/>
</dbReference>
<dbReference type="PANTHER" id="PTHR33620:SF1">
    <property type="entry name" value="UREASE ACCESSORY PROTEIN F"/>
    <property type="match status" value="1"/>
</dbReference>
<dbReference type="Pfam" id="PF01730">
    <property type="entry name" value="UreF"/>
    <property type="match status" value="1"/>
</dbReference>
<dbReference type="PIRSF" id="PIRSF009467">
    <property type="entry name" value="Ureas_acces_UreF"/>
    <property type="match status" value="1"/>
</dbReference>
<comment type="function">
    <text evidence="1">Required for maturation of urease via the functional incorporation of the urease nickel metallocenter.</text>
</comment>
<comment type="subunit">
    <text evidence="1">UreD, UreF and UreG form a complex that acts as a GTP-hydrolysis-dependent molecular chaperone, activating the urease apoprotein by helping to assemble the nickel containing metallocenter of UreC. The UreE protein probably delivers the nickel.</text>
</comment>
<comment type="subcellular location">
    <subcellularLocation>
        <location evidence="1">Cytoplasm</location>
    </subcellularLocation>
</comment>
<comment type="similarity">
    <text evidence="1">Belongs to the UreF family.</text>
</comment>
<protein>
    <recommendedName>
        <fullName evidence="1">Urease accessory protein UreF</fullName>
    </recommendedName>
</protein>